<sequence>MPTFPTTTSSWDNLLNALARSSIWNWLQAMFIGETTSAPQPTNLGILDNLAPAVQIILGISFLTLLAIGLFALWKRSIRSIQKIVMFVITLYQLYKKGSDFFQVLLANPEGSGRQIQDNNNIFLSLGLQEKILKKLQMVENKVRDLEGIIVARKPASKRDCSSEPYCSCSDCQSPLPTSGFTS</sequence>
<feature type="chain" id="PRO_0000249436" description="Transmembrane and coiled-coil domain-containing protein 2">
    <location>
        <begin position="1"/>
        <end position="183"/>
    </location>
</feature>
<feature type="transmembrane region" description="Helical" evidence="1">
    <location>
        <begin position="54"/>
        <end position="74"/>
    </location>
</feature>
<feature type="coiled-coil region" evidence="1">
    <location>
        <begin position="127"/>
        <end position="150"/>
    </location>
</feature>
<feature type="sequence conflict" description="In Ref. 1." evidence="2" ref="1">
    <original>A</original>
    <variation>G</variation>
    <location>
        <position position="156"/>
    </location>
</feature>
<dbReference type="EMBL" id="AK006456">
    <property type="status" value="NOT_ANNOTATED_CDS"/>
    <property type="molecule type" value="mRNA"/>
</dbReference>
<dbReference type="EMBL" id="AL669949">
    <property type="status" value="NOT_ANNOTATED_CDS"/>
    <property type="molecule type" value="Genomic_DNA"/>
</dbReference>
<dbReference type="SMR" id="P0C1V4"/>
<dbReference type="FunCoup" id="P0C1V4">
    <property type="interactions" value="2"/>
</dbReference>
<dbReference type="STRING" id="10090.ENSMUSP00000101875"/>
<dbReference type="iPTMnet" id="P0C1V4"/>
<dbReference type="PhosphoSitePlus" id="P0C1V4"/>
<dbReference type="PaxDb" id="10090-ENSMUSP00000101875"/>
<dbReference type="ProteomicsDB" id="262835"/>
<dbReference type="AGR" id="MGI:1916719"/>
<dbReference type="MGI" id="MGI:1916719">
    <property type="gene designation" value="Tmco2"/>
</dbReference>
<dbReference type="eggNOG" id="ENOG502RR64">
    <property type="taxonomic scope" value="Eukaryota"/>
</dbReference>
<dbReference type="InParanoid" id="P0C1V4"/>
<dbReference type="PRO" id="PR:P0C1V4"/>
<dbReference type="Proteomes" id="UP000000589">
    <property type="component" value="Unplaced"/>
</dbReference>
<dbReference type="RNAct" id="P0C1V4">
    <property type="molecule type" value="protein"/>
</dbReference>
<dbReference type="GO" id="GO:0016020">
    <property type="term" value="C:membrane"/>
    <property type="evidence" value="ECO:0007669"/>
    <property type="project" value="UniProtKB-SubCell"/>
</dbReference>
<dbReference type="InterPro" id="IPR031697">
    <property type="entry name" value="TMCCDC2"/>
</dbReference>
<dbReference type="PANTHER" id="PTHR38496">
    <property type="entry name" value="TRANSMEMBRANE AND COILED-COIL DOMAIN-CONTAINING PROTEIN 2"/>
    <property type="match status" value="1"/>
</dbReference>
<dbReference type="PANTHER" id="PTHR38496:SF1">
    <property type="entry name" value="TRANSMEMBRANE AND COILED-COIL DOMAIN-CONTAINING PROTEIN 2"/>
    <property type="match status" value="1"/>
</dbReference>
<dbReference type="Pfam" id="PF15844">
    <property type="entry name" value="TMCCDC2"/>
    <property type="match status" value="1"/>
</dbReference>
<accession>P0C1V4</accession>
<gene>
    <name type="primary">Tmco2</name>
</gene>
<proteinExistence type="evidence at protein level"/>
<evidence type="ECO:0000255" key="1"/>
<evidence type="ECO:0000305" key="2"/>
<keyword id="KW-0175">Coiled coil</keyword>
<keyword id="KW-0472">Membrane</keyword>
<keyword id="KW-1185">Reference proteome</keyword>
<keyword id="KW-0812">Transmembrane</keyword>
<keyword id="KW-1133">Transmembrane helix</keyword>
<reference key="1">
    <citation type="journal article" date="2005" name="Science">
        <title>The transcriptional landscape of the mammalian genome.</title>
        <authorList>
            <person name="Carninci P."/>
            <person name="Kasukawa T."/>
            <person name="Katayama S."/>
            <person name="Gough J."/>
            <person name="Frith M.C."/>
            <person name="Maeda N."/>
            <person name="Oyama R."/>
            <person name="Ravasi T."/>
            <person name="Lenhard B."/>
            <person name="Wells C."/>
            <person name="Kodzius R."/>
            <person name="Shimokawa K."/>
            <person name="Bajic V.B."/>
            <person name="Brenner S.E."/>
            <person name="Batalov S."/>
            <person name="Forrest A.R."/>
            <person name="Zavolan M."/>
            <person name="Davis M.J."/>
            <person name="Wilming L.G."/>
            <person name="Aidinis V."/>
            <person name="Allen J.E."/>
            <person name="Ambesi-Impiombato A."/>
            <person name="Apweiler R."/>
            <person name="Aturaliya R.N."/>
            <person name="Bailey T.L."/>
            <person name="Bansal M."/>
            <person name="Baxter L."/>
            <person name="Beisel K.W."/>
            <person name="Bersano T."/>
            <person name="Bono H."/>
            <person name="Chalk A.M."/>
            <person name="Chiu K.P."/>
            <person name="Choudhary V."/>
            <person name="Christoffels A."/>
            <person name="Clutterbuck D.R."/>
            <person name="Crowe M.L."/>
            <person name="Dalla E."/>
            <person name="Dalrymple B.P."/>
            <person name="de Bono B."/>
            <person name="Della Gatta G."/>
            <person name="di Bernardo D."/>
            <person name="Down T."/>
            <person name="Engstrom P."/>
            <person name="Fagiolini M."/>
            <person name="Faulkner G."/>
            <person name="Fletcher C.F."/>
            <person name="Fukushima T."/>
            <person name="Furuno M."/>
            <person name="Futaki S."/>
            <person name="Gariboldi M."/>
            <person name="Georgii-Hemming P."/>
            <person name="Gingeras T.R."/>
            <person name="Gojobori T."/>
            <person name="Green R.E."/>
            <person name="Gustincich S."/>
            <person name="Harbers M."/>
            <person name="Hayashi Y."/>
            <person name="Hensch T.K."/>
            <person name="Hirokawa N."/>
            <person name="Hill D."/>
            <person name="Huminiecki L."/>
            <person name="Iacono M."/>
            <person name="Ikeo K."/>
            <person name="Iwama A."/>
            <person name="Ishikawa T."/>
            <person name="Jakt M."/>
            <person name="Kanapin A."/>
            <person name="Katoh M."/>
            <person name="Kawasawa Y."/>
            <person name="Kelso J."/>
            <person name="Kitamura H."/>
            <person name="Kitano H."/>
            <person name="Kollias G."/>
            <person name="Krishnan S.P."/>
            <person name="Kruger A."/>
            <person name="Kummerfeld S.K."/>
            <person name="Kurochkin I.V."/>
            <person name="Lareau L.F."/>
            <person name="Lazarevic D."/>
            <person name="Lipovich L."/>
            <person name="Liu J."/>
            <person name="Liuni S."/>
            <person name="McWilliam S."/>
            <person name="Madan Babu M."/>
            <person name="Madera M."/>
            <person name="Marchionni L."/>
            <person name="Matsuda H."/>
            <person name="Matsuzawa S."/>
            <person name="Miki H."/>
            <person name="Mignone F."/>
            <person name="Miyake S."/>
            <person name="Morris K."/>
            <person name="Mottagui-Tabar S."/>
            <person name="Mulder N."/>
            <person name="Nakano N."/>
            <person name="Nakauchi H."/>
            <person name="Ng P."/>
            <person name="Nilsson R."/>
            <person name="Nishiguchi S."/>
            <person name="Nishikawa S."/>
            <person name="Nori F."/>
            <person name="Ohara O."/>
            <person name="Okazaki Y."/>
            <person name="Orlando V."/>
            <person name="Pang K.C."/>
            <person name="Pavan W.J."/>
            <person name="Pavesi G."/>
            <person name="Pesole G."/>
            <person name="Petrovsky N."/>
            <person name="Piazza S."/>
            <person name="Reed J."/>
            <person name="Reid J.F."/>
            <person name="Ring B.Z."/>
            <person name="Ringwald M."/>
            <person name="Rost B."/>
            <person name="Ruan Y."/>
            <person name="Salzberg S.L."/>
            <person name="Sandelin A."/>
            <person name="Schneider C."/>
            <person name="Schoenbach C."/>
            <person name="Sekiguchi K."/>
            <person name="Semple C.A."/>
            <person name="Seno S."/>
            <person name="Sessa L."/>
            <person name="Sheng Y."/>
            <person name="Shibata Y."/>
            <person name="Shimada H."/>
            <person name="Shimada K."/>
            <person name="Silva D."/>
            <person name="Sinclair B."/>
            <person name="Sperling S."/>
            <person name="Stupka E."/>
            <person name="Sugiura K."/>
            <person name="Sultana R."/>
            <person name="Takenaka Y."/>
            <person name="Taki K."/>
            <person name="Tammoja K."/>
            <person name="Tan S.L."/>
            <person name="Tang S."/>
            <person name="Taylor M.S."/>
            <person name="Tegner J."/>
            <person name="Teichmann S.A."/>
            <person name="Ueda H.R."/>
            <person name="van Nimwegen E."/>
            <person name="Verardo R."/>
            <person name="Wei C.L."/>
            <person name="Yagi K."/>
            <person name="Yamanishi H."/>
            <person name="Zabarovsky E."/>
            <person name="Zhu S."/>
            <person name="Zimmer A."/>
            <person name="Hide W."/>
            <person name="Bult C."/>
            <person name="Grimmond S.M."/>
            <person name="Teasdale R.D."/>
            <person name="Liu E.T."/>
            <person name="Brusic V."/>
            <person name="Quackenbush J."/>
            <person name="Wahlestedt C."/>
            <person name="Mattick J.S."/>
            <person name="Hume D.A."/>
            <person name="Kai C."/>
            <person name="Sasaki D."/>
            <person name="Tomaru Y."/>
            <person name="Fukuda S."/>
            <person name="Kanamori-Katayama M."/>
            <person name="Suzuki M."/>
            <person name="Aoki J."/>
            <person name="Arakawa T."/>
            <person name="Iida J."/>
            <person name="Imamura K."/>
            <person name="Itoh M."/>
            <person name="Kato T."/>
            <person name="Kawaji H."/>
            <person name="Kawagashira N."/>
            <person name="Kawashima T."/>
            <person name="Kojima M."/>
            <person name="Kondo S."/>
            <person name="Konno H."/>
            <person name="Nakano K."/>
            <person name="Ninomiya N."/>
            <person name="Nishio T."/>
            <person name="Okada M."/>
            <person name="Plessy C."/>
            <person name="Shibata K."/>
            <person name="Shiraki T."/>
            <person name="Suzuki S."/>
            <person name="Tagami M."/>
            <person name="Waki K."/>
            <person name="Watahiki A."/>
            <person name="Okamura-Oho Y."/>
            <person name="Suzuki H."/>
            <person name="Kawai J."/>
            <person name="Hayashizaki Y."/>
        </authorList>
    </citation>
    <scope>NUCLEOTIDE SEQUENCE [LARGE SCALE MRNA]</scope>
    <source>
        <strain>C57BL/6J</strain>
        <tissue>Testis</tissue>
    </source>
</reference>
<reference key="2">
    <citation type="journal article" date="2009" name="PLoS Biol.">
        <title>Lineage-specific biology revealed by a finished genome assembly of the mouse.</title>
        <authorList>
            <person name="Church D.M."/>
            <person name="Goodstadt L."/>
            <person name="Hillier L.W."/>
            <person name="Zody M.C."/>
            <person name="Goldstein S."/>
            <person name="She X."/>
            <person name="Bult C.J."/>
            <person name="Agarwala R."/>
            <person name="Cherry J.L."/>
            <person name="DiCuccio M."/>
            <person name="Hlavina W."/>
            <person name="Kapustin Y."/>
            <person name="Meric P."/>
            <person name="Maglott D."/>
            <person name="Birtle Z."/>
            <person name="Marques A.C."/>
            <person name="Graves T."/>
            <person name="Zhou S."/>
            <person name="Teague B."/>
            <person name="Potamousis K."/>
            <person name="Churas C."/>
            <person name="Place M."/>
            <person name="Herschleb J."/>
            <person name="Runnheim R."/>
            <person name="Forrest D."/>
            <person name="Amos-Landgraf J."/>
            <person name="Schwartz D.C."/>
            <person name="Cheng Z."/>
            <person name="Lindblad-Toh K."/>
            <person name="Eichler E.E."/>
            <person name="Ponting C.P."/>
        </authorList>
    </citation>
    <scope>NUCLEOTIDE SEQUENCE [LARGE SCALE GENOMIC DNA]</scope>
    <source>
        <strain>C57BL/6J</strain>
    </source>
</reference>
<reference key="3">
    <citation type="journal article" date="2010" name="Cell">
        <title>A tissue-specific atlas of mouse protein phosphorylation and expression.</title>
        <authorList>
            <person name="Huttlin E.L."/>
            <person name="Jedrychowski M.P."/>
            <person name="Elias J.E."/>
            <person name="Goswami T."/>
            <person name="Rad R."/>
            <person name="Beausoleil S.A."/>
            <person name="Villen J."/>
            <person name="Haas W."/>
            <person name="Sowa M.E."/>
            <person name="Gygi S.P."/>
        </authorList>
    </citation>
    <scope>IDENTIFICATION BY MASS SPECTROMETRY [LARGE SCALE ANALYSIS]</scope>
    <source>
        <tissue>Testis</tissue>
    </source>
</reference>
<comment type="subcellular location">
    <subcellularLocation>
        <location evidence="2">Membrane</location>
        <topology evidence="2">Single-pass membrane protein</topology>
    </subcellularLocation>
</comment>
<comment type="sequence caution" evidence="2">
    <conflict type="erroneous termination">
        <sequence resource="EMBL" id="AK006456"/>
    </conflict>
    <text>Truncated C-terminus.</text>
</comment>
<name>TMCO2_MOUSE</name>
<protein>
    <recommendedName>
        <fullName>Transmembrane and coiled-coil domain-containing protein 2</fullName>
    </recommendedName>
</protein>
<organism>
    <name type="scientific">Mus musculus</name>
    <name type="common">Mouse</name>
    <dbReference type="NCBI Taxonomy" id="10090"/>
    <lineage>
        <taxon>Eukaryota</taxon>
        <taxon>Metazoa</taxon>
        <taxon>Chordata</taxon>
        <taxon>Craniata</taxon>
        <taxon>Vertebrata</taxon>
        <taxon>Euteleostomi</taxon>
        <taxon>Mammalia</taxon>
        <taxon>Eutheria</taxon>
        <taxon>Euarchontoglires</taxon>
        <taxon>Glires</taxon>
        <taxon>Rodentia</taxon>
        <taxon>Myomorpha</taxon>
        <taxon>Muroidea</taxon>
        <taxon>Muridae</taxon>
        <taxon>Murinae</taxon>
        <taxon>Mus</taxon>
        <taxon>Mus</taxon>
    </lineage>
</organism>